<sequence>MECAPPAAGFLYWVGASTIAYLALRASYSLFRAFQVWCVGNEALVGPRLGEWAVVTGGTDGIGKAYAEELAKRGMKIVLISRSQDKLNQVSNNIKEKFNVETRTIAVDFSLDDIYDKIKTGLSGLEIGVLVNNVGMSYEYPEYFLEIPDLDNTIKKLININVLSVCKVTRLVLPGMVERSKGVILNISSASGMLPVPLLTIYSATKAFVDFFSQCLHEEYKSKGIFVQSVMPYLVATKLAKIQKPTLDKPSAETFVKSAIKTVGLQTRTTGYVIHSLMGSINSIMPRWMYFKIIMGFSKSLRNRYLKKRKKN</sequence>
<protein>
    <recommendedName>
        <fullName evidence="7">Very-long-chain 3-oxoacyl-CoA reductase</fullName>
        <ecNumber evidence="2">1.1.1.330</ecNumber>
    </recommendedName>
    <alternativeName>
        <fullName evidence="2">17-beta-hydroxysteroid dehydrogenase 12</fullName>
        <shortName evidence="2">17-beta-HSD 12</shortName>
    </alternativeName>
    <alternativeName>
        <fullName evidence="2">3-ketoacyl-CoA reductase</fullName>
        <shortName evidence="2">KAR</shortName>
    </alternativeName>
    <alternativeName>
        <fullName evidence="2">Estradiol 17-beta-dehydrogenase 12</fullName>
        <ecNumber evidence="2">1.1.1.62</ecNumber>
    </alternativeName>
    <alternativeName>
        <fullName>KIK-I</fullName>
    </alternativeName>
</protein>
<organism>
    <name type="scientific">Mus musculus</name>
    <name type="common">Mouse</name>
    <dbReference type="NCBI Taxonomy" id="10090"/>
    <lineage>
        <taxon>Eukaryota</taxon>
        <taxon>Metazoa</taxon>
        <taxon>Chordata</taxon>
        <taxon>Craniata</taxon>
        <taxon>Vertebrata</taxon>
        <taxon>Euteleostomi</taxon>
        <taxon>Mammalia</taxon>
        <taxon>Eutheria</taxon>
        <taxon>Euarchontoglires</taxon>
        <taxon>Glires</taxon>
        <taxon>Rodentia</taxon>
        <taxon>Myomorpha</taxon>
        <taxon>Muroidea</taxon>
        <taxon>Muridae</taxon>
        <taxon>Murinae</taxon>
        <taxon>Mus</taxon>
        <taxon>Mus</taxon>
    </lineage>
</organism>
<gene>
    <name evidence="8" type="primary">Hsd17b12</name>
    <name type="synonym">Kik1</name>
</gene>
<feature type="chain" id="PRO_0000054576" description="Very-long-chain 3-oxoacyl-CoA reductase">
    <location>
        <begin position="1"/>
        <end position="312"/>
    </location>
</feature>
<feature type="transmembrane region" description="Helical" evidence="3">
    <location>
        <begin position="4"/>
        <end position="24"/>
    </location>
</feature>
<feature type="transmembrane region" description="Helical" evidence="3">
    <location>
        <begin position="182"/>
        <end position="202"/>
    </location>
</feature>
<feature type="transmembrane region" description="Helical" evidence="3">
    <location>
        <begin position="269"/>
        <end position="285"/>
    </location>
</feature>
<feature type="short sequence motif" description="Di-lysine motif" evidence="1">
    <location>
        <begin position="308"/>
        <end position="312"/>
    </location>
</feature>
<feature type="active site" description="Proton acceptor" evidence="4">
    <location>
        <position position="202"/>
    </location>
</feature>
<feature type="binding site" evidence="1">
    <location>
        <begin position="50"/>
        <end position="79"/>
    </location>
    <ligand>
        <name>NADP(+)</name>
        <dbReference type="ChEBI" id="CHEBI:58349"/>
    </ligand>
</feature>
<feature type="binding site" evidence="1">
    <location>
        <position position="189"/>
    </location>
    <ligand>
        <name>substrate</name>
    </ligand>
</feature>
<feature type="splice variant" id="VSP_020255" description="In isoform 2." evidence="6">
    <location>
        <begin position="1"/>
        <end position="135"/>
    </location>
</feature>
<feature type="sequence conflict" description="In Ref. 2; BAE39915." evidence="7" ref="2">
    <original>E</original>
    <variation>V</variation>
    <location>
        <position position="2"/>
    </location>
</feature>
<feature type="sequence conflict" description="In Ref. 2; BAE29906/BAE31260." evidence="7" ref="2">
    <original>V</original>
    <variation>M</variation>
    <location>
        <position position="256"/>
    </location>
</feature>
<comment type="function">
    <text evidence="2">Catalyzes the second of the four reactions of the long-chain fatty acids elongation cycle. This endoplasmic reticulum-bound enzymatic process, allows the addition of two carbons to the chain of long- and very long-chain fatty acids/VLCFAs per cycle. This enzyme has a 3-ketoacyl-CoA reductase activity, reducing 3-ketoacyl-CoA to 3-hydroxyacyl-CoA, within each cycle of fatty acid elongation. Thereby, it may participate in the production of VLCFAs of different chain lengths that are involved in multiple biological processes as precursors of membrane lipids and lipid mediators. May also catalyze the transformation of estrone (E1) into estradiol (E2) and play a role in estrogen formation.</text>
</comment>
<comment type="catalytic activity">
    <reaction evidence="2">
        <text>a very-long-chain (3R)-3-hydroxyacyl-CoA + NADP(+) = a very-long-chain 3-oxoacyl-CoA + NADPH + H(+)</text>
        <dbReference type="Rhea" id="RHEA:48680"/>
        <dbReference type="ChEBI" id="CHEBI:15378"/>
        <dbReference type="ChEBI" id="CHEBI:57783"/>
        <dbReference type="ChEBI" id="CHEBI:58349"/>
        <dbReference type="ChEBI" id="CHEBI:85440"/>
        <dbReference type="ChEBI" id="CHEBI:90725"/>
        <dbReference type="EC" id="1.1.1.330"/>
    </reaction>
</comment>
<comment type="catalytic activity">
    <reaction evidence="2">
        <text>17beta-estradiol + NAD(+) = estrone + NADH + H(+)</text>
        <dbReference type="Rhea" id="RHEA:24612"/>
        <dbReference type="ChEBI" id="CHEBI:15378"/>
        <dbReference type="ChEBI" id="CHEBI:16469"/>
        <dbReference type="ChEBI" id="CHEBI:17263"/>
        <dbReference type="ChEBI" id="CHEBI:57540"/>
        <dbReference type="ChEBI" id="CHEBI:57945"/>
        <dbReference type="EC" id="1.1.1.62"/>
    </reaction>
</comment>
<comment type="catalytic activity">
    <reaction evidence="2">
        <text>17beta-estradiol + NADP(+) = estrone + NADPH + H(+)</text>
        <dbReference type="Rhea" id="RHEA:24616"/>
        <dbReference type="ChEBI" id="CHEBI:15378"/>
        <dbReference type="ChEBI" id="CHEBI:16469"/>
        <dbReference type="ChEBI" id="CHEBI:17263"/>
        <dbReference type="ChEBI" id="CHEBI:57783"/>
        <dbReference type="ChEBI" id="CHEBI:58349"/>
        <dbReference type="EC" id="1.1.1.62"/>
    </reaction>
</comment>
<comment type="catalytic activity">
    <reaction evidence="5">
        <text>3-oxooctadecanoyl-CoA + NADPH + H(+) = (3R)-hydroxyoctadecanoyl-CoA + NADP(+)</text>
        <dbReference type="Rhea" id="RHEA:39151"/>
        <dbReference type="ChEBI" id="CHEBI:15378"/>
        <dbReference type="ChEBI" id="CHEBI:57783"/>
        <dbReference type="ChEBI" id="CHEBI:58349"/>
        <dbReference type="ChEBI" id="CHEBI:71407"/>
        <dbReference type="ChEBI" id="CHEBI:76374"/>
    </reaction>
</comment>
<comment type="catalytic activity">
    <reaction evidence="2">
        <text>(7Z,10Z,13Z,16Z)-3-oxodocosatetraenoyl-CoA + NADPH + H(+) = (3R)-hydroxy-(7Z,10Z,13Z,16Z)-docosatetraenoyl-CoA + NADP(+)</text>
        <dbReference type="Rhea" id="RHEA:39323"/>
        <dbReference type="ChEBI" id="CHEBI:15378"/>
        <dbReference type="ChEBI" id="CHEBI:57783"/>
        <dbReference type="ChEBI" id="CHEBI:58349"/>
        <dbReference type="ChEBI" id="CHEBI:73852"/>
        <dbReference type="ChEBI" id="CHEBI:76415"/>
    </reaction>
</comment>
<comment type="catalytic activity">
    <reaction evidence="2">
        <text>3-oxo-(7Z,10Z,13Z,16Z,19Z)-docosapentaenoyl-CoA + NADPH + H(+) = (3R)-hydroxy-(7Z,10Z,13Z,16Z,19Z)-docosapentaenoyl-CoA + NADP(+)</text>
        <dbReference type="Rhea" id="RHEA:39459"/>
        <dbReference type="ChEBI" id="CHEBI:15378"/>
        <dbReference type="ChEBI" id="CHEBI:57783"/>
        <dbReference type="ChEBI" id="CHEBI:58349"/>
        <dbReference type="ChEBI" id="CHEBI:73863"/>
        <dbReference type="ChEBI" id="CHEBI:76460"/>
    </reaction>
</comment>
<comment type="catalytic activity">
    <reaction evidence="2">
        <text>(8Z,11Z,14Z)-3-oxoeicosatrienoyl-CoA + NADPH + H(+) = (3R)-hydroxy-(8Z,11Z,14Z)-eicosatrienoyl-CoA + NADP(+)</text>
        <dbReference type="Rhea" id="RHEA:39311"/>
        <dbReference type="ChEBI" id="CHEBI:15378"/>
        <dbReference type="ChEBI" id="CHEBI:57783"/>
        <dbReference type="ChEBI" id="CHEBI:58349"/>
        <dbReference type="ChEBI" id="CHEBI:71481"/>
        <dbReference type="ChEBI" id="CHEBI:76411"/>
    </reaction>
</comment>
<comment type="pathway">
    <text evidence="2">Lipid metabolism; fatty acid biosynthesis.</text>
</comment>
<comment type="pathway">
    <text evidence="2">Steroid biosynthesis; estrogen biosynthesis.</text>
</comment>
<comment type="subcellular location">
    <subcellularLocation>
        <location evidence="2">Endoplasmic reticulum membrane</location>
        <topology evidence="2">Multi-pass membrane protein</topology>
    </subcellularLocation>
</comment>
<comment type="alternative products">
    <event type="alternative splicing"/>
    <isoform>
        <id>O70503-1</id>
        <name>1</name>
        <sequence type="displayed"/>
    </isoform>
    <isoform>
        <id>O70503-2</id>
        <name>2</name>
        <sequence type="described" ref="VSP_020255"/>
    </isoform>
</comment>
<comment type="tissue specificity">
    <text evidence="5">Expressed in most tissues tested.</text>
</comment>
<comment type="domain">
    <text evidence="1">The di-lysine motif confers endoplasmic reticulum localization for type I membrane proteins.</text>
</comment>
<comment type="similarity">
    <text evidence="7">Belongs to the short-chain dehydrogenases/reductases (SDR) family. 17-beta-HSD 3 subfamily.</text>
</comment>
<keyword id="KW-0025">Alternative splicing</keyword>
<keyword id="KW-0256">Endoplasmic reticulum</keyword>
<keyword id="KW-0444">Lipid biosynthesis</keyword>
<keyword id="KW-0443">Lipid metabolism</keyword>
<keyword id="KW-0472">Membrane</keyword>
<keyword id="KW-0521">NADP</keyword>
<keyword id="KW-0560">Oxidoreductase</keyword>
<keyword id="KW-1185">Reference proteome</keyword>
<keyword id="KW-0752">Steroid biosynthesis</keyword>
<keyword id="KW-0812">Transmembrane</keyword>
<keyword id="KW-1133">Transmembrane helix</keyword>
<dbReference type="EC" id="1.1.1.330" evidence="2"/>
<dbReference type="EC" id="1.1.1.62" evidence="2"/>
<dbReference type="EMBL" id="AF064635">
    <property type="protein sequence ID" value="AAC16885.1"/>
    <property type="molecule type" value="mRNA"/>
</dbReference>
<dbReference type="EMBL" id="AK078841">
    <property type="protein sequence ID" value="BAC37418.1"/>
    <property type="molecule type" value="mRNA"/>
</dbReference>
<dbReference type="EMBL" id="AK081869">
    <property type="protein sequence ID" value="BAC38354.1"/>
    <property type="molecule type" value="mRNA"/>
</dbReference>
<dbReference type="EMBL" id="AK082715">
    <property type="protein sequence ID" value="BAC38583.1"/>
    <property type="molecule type" value="mRNA"/>
</dbReference>
<dbReference type="EMBL" id="AK088521">
    <property type="protein sequence ID" value="BAC40401.1"/>
    <property type="molecule type" value="mRNA"/>
</dbReference>
<dbReference type="EMBL" id="AK150849">
    <property type="protein sequence ID" value="BAE29906.1"/>
    <property type="molecule type" value="mRNA"/>
</dbReference>
<dbReference type="EMBL" id="AK152489">
    <property type="protein sequence ID" value="BAE31260.1"/>
    <property type="molecule type" value="mRNA"/>
</dbReference>
<dbReference type="EMBL" id="AK166027">
    <property type="protein sequence ID" value="BAE38530.1"/>
    <property type="molecule type" value="mRNA"/>
</dbReference>
<dbReference type="EMBL" id="AK167908">
    <property type="protein sequence ID" value="BAE39915.1"/>
    <property type="molecule type" value="mRNA"/>
</dbReference>
<dbReference type="EMBL" id="BC037620">
    <property type="protein sequence ID" value="AAH37620.1"/>
    <property type="molecule type" value="mRNA"/>
</dbReference>
<dbReference type="CCDS" id="CCDS16458.1">
    <molecule id="O70503-1"/>
</dbReference>
<dbReference type="RefSeq" id="NP_062631.1">
    <molecule id="O70503-1"/>
    <property type="nucleotide sequence ID" value="NM_019657.4"/>
</dbReference>
<dbReference type="SMR" id="O70503"/>
<dbReference type="BioGRID" id="207914">
    <property type="interactions" value="9"/>
</dbReference>
<dbReference type="FunCoup" id="O70503">
    <property type="interactions" value="1873"/>
</dbReference>
<dbReference type="IntAct" id="O70503">
    <property type="interactions" value="2"/>
</dbReference>
<dbReference type="MINT" id="O70503"/>
<dbReference type="STRING" id="10090.ENSMUSP00000028619"/>
<dbReference type="SwissLipids" id="SLP:000000434"/>
<dbReference type="GlyGen" id="O70503">
    <property type="glycosylation" value="1 site, 1 O-linked glycan (1 site)"/>
</dbReference>
<dbReference type="iPTMnet" id="O70503"/>
<dbReference type="MetOSite" id="O70503"/>
<dbReference type="PhosphoSitePlus" id="O70503"/>
<dbReference type="SwissPalm" id="O70503"/>
<dbReference type="jPOST" id="O70503"/>
<dbReference type="PaxDb" id="10090-ENSMUSP00000028619"/>
<dbReference type="PeptideAtlas" id="O70503"/>
<dbReference type="ProteomicsDB" id="279351">
    <molecule id="O70503-1"/>
</dbReference>
<dbReference type="ProteomicsDB" id="279352">
    <molecule id="O70503-2"/>
</dbReference>
<dbReference type="Pumba" id="O70503"/>
<dbReference type="Antibodypedia" id="3090">
    <property type="antibodies" value="198 antibodies from 24 providers"/>
</dbReference>
<dbReference type="DNASU" id="56348"/>
<dbReference type="Ensembl" id="ENSMUST00000028619.5">
    <molecule id="O70503-1"/>
    <property type="protein sequence ID" value="ENSMUSP00000028619.5"/>
    <property type="gene ID" value="ENSMUSG00000027195.11"/>
</dbReference>
<dbReference type="GeneID" id="56348"/>
<dbReference type="KEGG" id="mmu:56348"/>
<dbReference type="UCSC" id="uc008lgp.1">
    <molecule id="O70503-1"/>
    <property type="organism name" value="mouse"/>
</dbReference>
<dbReference type="AGR" id="MGI:1926967"/>
<dbReference type="CTD" id="51144"/>
<dbReference type="MGI" id="MGI:1926967">
    <property type="gene designation" value="Hsd17b12"/>
</dbReference>
<dbReference type="VEuPathDB" id="HostDB:ENSMUSG00000027195"/>
<dbReference type="eggNOG" id="KOG1014">
    <property type="taxonomic scope" value="Eukaryota"/>
</dbReference>
<dbReference type="GeneTree" id="ENSGT00940000154860"/>
<dbReference type="HOGENOM" id="CLU_010194_38_0_1"/>
<dbReference type="InParanoid" id="O70503"/>
<dbReference type="OMA" id="LVAPGMM"/>
<dbReference type="OrthoDB" id="5545019at2759"/>
<dbReference type="PhylomeDB" id="O70503"/>
<dbReference type="TreeFam" id="TF314591"/>
<dbReference type="Reactome" id="R-MMU-193048">
    <property type="pathway name" value="Androgen biosynthesis"/>
</dbReference>
<dbReference type="Reactome" id="R-MMU-75876">
    <property type="pathway name" value="Synthesis of very long-chain fatty acyl-CoAs"/>
</dbReference>
<dbReference type="UniPathway" id="UPA00094"/>
<dbReference type="UniPathway" id="UPA00769"/>
<dbReference type="BioGRID-ORCS" id="56348">
    <property type="hits" value="24 hits in 80 CRISPR screens"/>
</dbReference>
<dbReference type="CD-CODE" id="CE726F99">
    <property type="entry name" value="Postsynaptic density"/>
</dbReference>
<dbReference type="ChiTaRS" id="Hsd17b12">
    <property type="organism name" value="mouse"/>
</dbReference>
<dbReference type="PRO" id="PR:O70503"/>
<dbReference type="Proteomes" id="UP000000589">
    <property type="component" value="Chromosome 2"/>
</dbReference>
<dbReference type="RNAct" id="O70503">
    <property type="molecule type" value="protein"/>
</dbReference>
<dbReference type="Bgee" id="ENSMUSG00000027195">
    <property type="expression patterns" value="Expressed in tail skin and 269 other cell types or tissues"/>
</dbReference>
<dbReference type="ExpressionAtlas" id="O70503">
    <property type="expression patterns" value="baseline and differential"/>
</dbReference>
<dbReference type="GO" id="GO:0031012">
    <property type="term" value="C:extracellular matrix"/>
    <property type="evidence" value="ECO:0000314"/>
    <property type="project" value="MGI"/>
</dbReference>
<dbReference type="GO" id="GO:0009923">
    <property type="term" value="C:fatty acid elongase complex"/>
    <property type="evidence" value="ECO:0007669"/>
    <property type="project" value="Ensembl"/>
</dbReference>
<dbReference type="GO" id="GO:0005518">
    <property type="term" value="F:collagen binding"/>
    <property type="evidence" value="ECO:0000314"/>
    <property type="project" value="MGI"/>
</dbReference>
<dbReference type="GO" id="GO:0004303">
    <property type="term" value="F:estradiol 17-beta-dehydrogenase [NAD(P)+] activity"/>
    <property type="evidence" value="ECO:0007669"/>
    <property type="project" value="UniProtKB-EC"/>
</dbReference>
<dbReference type="GO" id="GO:0001968">
    <property type="term" value="F:fibronectin binding"/>
    <property type="evidence" value="ECO:0000314"/>
    <property type="project" value="MGI"/>
</dbReference>
<dbReference type="GO" id="GO:0008201">
    <property type="term" value="F:heparin binding"/>
    <property type="evidence" value="ECO:0000314"/>
    <property type="project" value="MGI"/>
</dbReference>
<dbReference type="GO" id="GO:0141040">
    <property type="term" value="F:very-long-chain 3-oxoacyl-CoA reductase activity"/>
    <property type="evidence" value="ECO:0007669"/>
    <property type="project" value="UniProtKB-EC"/>
</dbReference>
<dbReference type="GO" id="GO:0006703">
    <property type="term" value="P:estrogen biosynthetic process"/>
    <property type="evidence" value="ECO:0007669"/>
    <property type="project" value="UniProtKB-UniPathway"/>
</dbReference>
<dbReference type="GO" id="GO:0030198">
    <property type="term" value="P:extracellular matrix organization"/>
    <property type="evidence" value="ECO:0000314"/>
    <property type="project" value="MGI"/>
</dbReference>
<dbReference type="GO" id="GO:0019367">
    <property type="term" value="P:fatty acid elongation, saturated fatty acid"/>
    <property type="evidence" value="ECO:0007669"/>
    <property type="project" value="Ensembl"/>
</dbReference>
<dbReference type="GO" id="GO:0010811">
    <property type="term" value="P:positive regulation of cell-substrate adhesion"/>
    <property type="evidence" value="ECO:0000314"/>
    <property type="project" value="MGI"/>
</dbReference>
<dbReference type="CDD" id="cd05356">
    <property type="entry name" value="17beta-HSD1_like_SDR_c"/>
    <property type="match status" value="1"/>
</dbReference>
<dbReference type="FunFam" id="3.40.50.720:FF:000137">
    <property type="entry name" value="Hydroxysteroid (17-beta) dehydrogenase 3"/>
    <property type="match status" value="1"/>
</dbReference>
<dbReference type="Gene3D" id="3.40.50.720">
    <property type="entry name" value="NAD(P)-binding Rossmann-like Domain"/>
    <property type="match status" value="1"/>
</dbReference>
<dbReference type="InterPro" id="IPR036291">
    <property type="entry name" value="NAD(P)-bd_dom_sf"/>
</dbReference>
<dbReference type="InterPro" id="IPR020904">
    <property type="entry name" value="Sc_DH/Rdtase_CS"/>
</dbReference>
<dbReference type="InterPro" id="IPR002347">
    <property type="entry name" value="SDR_fam"/>
</dbReference>
<dbReference type="InterPro" id="IPR051019">
    <property type="entry name" value="VLCFA-Steroid_DH"/>
</dbReference>
<dbReference type="PANTHER" id="PTHR43899">
    <property type="entry name" value="RH59310P"/>
    <property type="match status" value="1"/>
</dbReference>
<dbReference type="PANTHER" id="PTHR43899:SF14">
    <property type="entry name" value="VERY-LONG-CHAIN 3-OXOACYL-COA REDUCTASE"/>
    <property type="match status" value="1"/>
</dbReference>
<dbReference type="Pfam" id="PF00106">
    <property type="entry name" value="adh_short"/>
    <property type="match status" value="1"/>
</dbReference>
<dbReference type="PIRSF" id="PIRSF000126">
    <property type="entry name" value="11-beta-HSD1"/>
    <property type="match status" value="1"/>
</dbReference>
<dbReference type="PRINTS" id="PR00081">
    <property type="entry name" value="GDHRDH"/>
</dbReference>
<dbReference type="PRINTS" id="PR00080">
    <property type="entry name" value="SDRFAMILY"/>
</dbReference>
<dbReference type="SUPFAM" id="SSF51735">
    <property type="entry name" value="NAD(P)-binding Rossmann-fold domains"/>
    <property type="match status" value="1"/>
</dbReference>
<dbReference type="PROSITE" id="PS00061">
    <property type="entry name" value="ADH_SHORT"/>
    <property type="match status" value="1"/>
</dbReference>
<name>DHB12_MOUSE</name>
<accession>O70503</accession>
<accession>Q3TID1</accession>
<accession>Q3U7V9</accession>
<accession>Q542N3</accession>
<accession>Q8CI39</accession>
<evidence type="ECO:0000250" key="1"/>
<evidence type="ECO:0000250" key="2">
    <source>
        <dbReference type="UniProtKB" id="Q53GQ0"/>
    </source>
</evidence>
<evidence type="ECO:0000255" key="3"/>
<evidence type="ECO:0000255" key="4">
    <source>
        <dbReference type="PROSITE-ProRule" id="PRU10001"/>
    </source>
</evidence>
<evidence type="ECO:0000269" key="5">
    <source>
    </source>
</evidence>
<evidence type="ECO:0000303" key="6">
    <source>
    </source>
</evidence>
<evidence type="ECO:0000305" key="7"/>
<evidence type="ECO:0000312" key="8">
    <source>
        <dbReference type="MGI" id="MGI:1926967"/>
    </source>
</evidence>
<reference key="1">
    <citation type="submission" date="1998-05" db="EMBL/GenBank/DDBJ databases">
        <authorList>
            <person name="Gambotto A."/>
            <person name="Pagliano O."/>
            <person name="Robbins P."/>
            <person name="Deleo A."/>
        </authorList>
    </citation>
    <scope>NUCLEOTIDE SEQUENCE [MRNA] (ISOFORM 1)</scope>
    <source>
        <strain>BALB/cJ</strain>
        <tissue>Liver</tissue>
    </source>
</reference>
<reference key="2">
    <citation type="journal article" date="2005" name="Science">
        <title>The transcriptional landscape of the mammalian genome.</title>
        <authorList>
            <person name="Carninci P."/>
            <person name="Kasukawa T."/>
            <person name="Katayama S."/>
            <person name="Gough J."/>
            <person name="Frith M.C."/>
            <person name="Maeda N."/>
            <person name="Oyama R."/>
            <person name="Ravasi T."/>
            <person name="Lenhard B."/>
            <person name="Wells C."/>
            <person name="Kodzius R."/>
            <person name="Shimokawa K."/>
            <person name="Bajic V.B."/>
            <person name="Brenner S.E."/>
            <person name="Batalov S."/>
            <person name="Forrest A.R."/>
            <person name="Zavolan M."/>
            <person name="Davis M.J."/>
            <person name="Wilming L.G."/>
            <person name="Aidinis V."/>
            <person name="Allen J.E."/>
            <person name="Ambesi-Impiombato A."/>
            <person name="Apweiler R."/>
            <person name="Aturaliya R.N."/>
            <person name="Bailey T.L."/>
            <person name="Bansal M."/>
            <person name="Baxter L."/>
            <person name="Beisel K.W."/>
            <person name="Bersano T."/>
            <person name="Bono H."/>
            <person name="Chalk A.M."/>
            <person name="Chiu K.P."/>
            <person name="Choudhary V."/>
            <person name="Christoffels A."/>
            <person name="Clutterbuck D.R."/>
            <person name="Crowe M.L."/>
            <person name="Dalla E."/>
            <person name="Dalrymple B.P."/>
            <person name="de Bono B."/>
            <person name="Della Gatta G."/>
            <person name="di Bernardo D."/>
            <person name="Down T."/>
            <person name="Engstrom P."/>
            <person name="Fagiolini M."/>
            <person name="Faulkner G."/>
            <person name="Fletcher C.F."/>
            <person name="Fukushima T."/>
            <person name="Furuno M."/>
            <person name="Futaki S."/>
            <person name="Gariboldi M."/>
            <person name="Georgii-Hemming P."/>
            <person name="Gingeras T.R."/>
            <person name="Gojobori T."/>
            <person name="Green R.E."/>
            <person name="Gustincich S."/>
            <person name="Harbers M."/>
            <person name="Hayashi Y."/>
            <person name="Hensch T.K."/>
            <person name="Hirokawa N."/>
            <person name="Hill D."/>
            <person name="Huminiecki L."/>
            <person name="Iacono M."/>
            <person name="Ikeo K."/>
            <person name="Iwama A."/>
            <person name="Ishikawa T."/>
            <person name="Jakt M."/>
            <person name="Kanapin A."/>
            <person name="Katoh M."/>
            <person name="Kawasawa Y."/>
            <person name="Kelso J."/>
            <person name="Kitamura H."/>
            <person name="Kitano H."/>
            <person name="Kollias G."/>
            <person name="Krishnan S.P."/>
            <person name="Kruger A."/>
            <person name="Kummerfeld S.K."/>
            <person name="Kurochkin I.V."/>
            <person name="Lareau L.F."/>
            <person name="Lazarevic D."/>
            <person name="Lipovich L."/>
            <person name="Liu J."/>
            <person name="Liuni S."/>
            <person name="McWilliam S."/>
            <person name="Madan Babu M."/>
            <person name="Madera M."/>
            <person name="Marchionni L."/>
            <person name="Matsuda H."/>
            <person name="Matsuzawa S."/>
            <person name="Miki H."/>
            <person name="Mignone F."/>
            <person name="Miyake S."/>
            <person name="Morris K."/>
            <person name="Mottagui-Tabar S."/>
            <person name="Mulder N."/>
            <person name="Nakano N."/>
            <person name="Nakauchi H."/>
            <person name="Ng P."/>
            <person name="Nilsson R."/>
            <person name="Nishiguchi S."/>
            <person name="Nishikawa S."/>
            <person name="Nori F."/>
            <person name="Ohara O."/>
            <person name="Okazaki Y."/>
            <person name="Orlando V."/>
            <person name="Pang K.C."/>
            <person name="Pavan W.J."/>
            <person name="Pavesi G."/>
            <person name="Pesole G."/>
            <person name="Petrovsky N."/>
            <person name="Piazza S."/>
            <person name="Reed J."/>
            <person name="Reid J.F."/>
            <person name="Ring B.Z."/>
            <person name="Ringwald M."/>
            <person name="Rost B."/>
            <person name="Ruan Y."/>
            <person name="Salzberg S.L."/>
            <person name="Sandelin A."/>
            <person name="Schneider C."/>
            <person name="Schoenbach C."/>
            <person name="Sekiguchi K."/>
            <person name="Semple C.A."/>
            <person name="Seno S."/>
            <person name="Sessa L."/>
            <person name="Sheng Y."/>
            <person name="Shibata Y."/>
            <person name="Shimada H."/>
            <person name="Shimada K."/>
            <person name="Silva D."/>
            <person name="Sinclair B."/>
            <person name="Sperling S."/>
            <person name="Stupka E."/>
            <person name="Sugiura K."/>
            <person name="Sultana R."/>
            <person name="Takenaka Y."/>
            <person name="Taki K."/>
            <person name="Tammoja K."/>
            <person name="Tan S.L."/>
            <person name="Tang S."/>
            <person name="Taylor M.S."/>
            <person name="Tegner J."/>
            <person name="Teichmann S.A."/>
            <person name="Ueda H.R."/>
            <person name="van Nimwegen E."/>
            <person name="Verardo R."/>
            <person name="Wei C.L."/>
            <person name="Yagi K."/>
            <person name="Yamanishi H."/>
            <person name="Zabarovsky E."/>
            <person name="Zhu S."/>
            <person name="Zimmer A."/>
            <person name="Hide W."/>
            <person name="Bult C."/>
            <person name="Grimmond S.M."/>
            <person name="Teasdale R.D."/>
            <person name="Liu E.T."/>
            <person name="Brusic V."/>
            <person name="Quackenbush J."/>
            <person name="Wahlestedt C."/>
            <person name="Mattick J.S."/>
            <person name="Hume D.A."/>
            <person name="Kai C."/>
            <person name="Sasaki D."/>
            <person name="Tomaru Y."/>
            <person name="Fukuda S."/>
            <person name="Kanamori-Katayama M."/>
            <person name="Suzuki M."/>
            <person name="Aoki J."/>
            <person name="Arakawa T."/>
            <person name="Iida J."/>
            <person name="Imamura K."/>
            <person name="Itoh M."/>
            <person name="Kato T."/>
            <person name="Kawaji H."/>
            <person name="Kawagashira N."/>
            <person name="Kawashima T."/>
            <person name="Kojima M."/>
            <person name="Kondo S."/>
            <person name="Konno H."/>
            <person name="Nakano K."/>
            <person name="Ninomiya N."/>
            <person name="Nishio T."/>
            <person name="Okada M."/>
            <person name="Plessy C."/>
            <person name="Shibata K."/>
            <person name="Shiraki T."/>
            <person name="Suzuki S."/>
            <person name="Tagami M."/>
            <person name="Waki K."/>
            <person name="Watahiki A."/>
            <person name="Okamura-Oho Y."/>
            <person name="Suzuki H."/>
            <person name="Kawai J."/>
            <person name="Hayashizaki Y."/>
        </authorList>
    </citation>
    <scope>NUCLEOTIDE SEQUENCE [LARGE SCALE MRNA] (ISOFORM 1)</scope>
    <source>
        <strain>BALB/cJ</strain>
        <strain>C57BL/6J</strain>
        <strain>NOD</strain>
        <tissue>Bone marrow</tissue>
        <tissue>Cerebellum</tissue>
        <tissue>Colon</tissue>
        <tissue>Head</tissue>
        <tissue>Lung</tissue>
        <tissue>Thymus</tissue>
    </source>
</reference>
<reference key="3">
    <citation type="journal article" date="2004" name="Genome Res.">
        <title>The status, quality, and expansion of the NIH full-length cDNA project: the Mammalian Gene Collection (MGC).</title>
        <authorList>
            <consortium name="The MGC Project Team"/>
        </authorList>
    </citation>
    <scope>NUCLEOTIDE SEQUENCE [LARGE SCALE MRNA] (ISOFORM 2)</scope>
    <source>
        <strain>FVB/N-3</strain>
        <tissue>Mammary tumor</tissue>
    </source>
</reference>
<reference key="4">
    <citation type="journal article" date="2003" name="J. Biol. Chem.">
        <title>Identification of two mammalian reductases involved in the two-carbon fatty acyl elongation cascade.</title>
        <authorList>
            <person name="Moon Y.-A."/>
            <person name="Horton J.D."/>
        </authorList>
    </citation>
    <scope>TISSUE SPECIFICITY</scope>
    <scope>CATALYTIC ACTIVITY</scope>
</reference>
<reference key="5">
    <citation type="journal article" date="2010" name="Cell">
        <title>A tissue-specific atlas of mouse protein phosphorylation and expression.</title>
        <authorList>
            <person name="Huttlin E.L."/>
            <person name="Jedrychowski M.P."/>
            <person name="Elias J.E."/>
            <person name="Goswami T."/>
            <person name="Rad R."/>
            <person name="Beausoleil S.A."/>
            <person name="Villen J."/>
            <person name="Haas W."/>
            <person name="Sowa M.E."/>
            <person name="Gygi S.P."/>
        </authorList>
    </citation>
    <scope>IDENTIFICATION BY MASS SPECTROMETRY [LARGE SCALE ANALYSIS]</scope>
    <source>
        <tissue>Brain</tissue>
        <tissue>Brown adipose tissue</tissue>
        <tissue>Heart</tissue>
        <tissue>Kidney</tissue>
        <tissue>Liver</tissue>
        <tissue>Lung</tissue>
        <tissue>Pancreas</tissue>
        <tissue>Spleen</tissue>
        <tissue>Testis</tissue>
    </source>
</reference>
<proteinExistence type="evidence at protein level"/>